<protein>
    <recommendedName>
        <fullName evidence="1">Large ribosomal subunit protein uL29</fullName>
    </recommendedName>
    <alternativeName>
        <fullName evidence="2">50S ribosomal protein L29</fullName>
    </alternativeName>
</protein>
<sequence length="68" mass="7962">MKLQEIKDFVKELRGLSQEELAKKENELKKELFDLRFQAAAGQLEKTARLDEVKKQIARVKTVQSEMK</sequence>
<proteinExistence type="inferred from homology"/>
<evidence type="ECO:0000255" key="1">
    <source>
        <dbReference type="HAMAP-Rule" id="MF_00374"/>
    </source>
</evidence>
<evidence type="ECO:0000305" key="2"/>
<name>RL29_STRA1</name>
<dbReference type="EMBL" id="CP000114">
    <property type="protein sequence ID" value="ABA45580.1"/>
    <property type="molecule type" value="Genomic_DNA"/>
</dbReference>
<dbReference type="RefSeq" id="WP_000775731.1">
    <property type="nucleotide sequence ID" value="NC_007432.1"/>
</dbReference>
<dbReference type="SMR" id="Q3K3W1"/>
<dbReference type="GeneID" id="69900034"/>
<dbReference type="KEGG" id="sak:SAK_0099"/>
<dbReference type="HOGENOM" id="CLU_158491_5_2_9"/>
<dbReference type="GO" id="GO:0022625">
    <property type="term" value="C:cytosolic large ribosomal subunit"/>
    <property type="evidence" value="ECO:0007669"/>
    <property type="project" value="TreeGrafter"/>
</dbReference>
<dbReference type="GO" id="GO:0003735">
    <property type="term" value="F:structural constituent of ribosome"/>
    <property type="evidence" value="ECO:0007669"/>
    <property type="project" value="InterPro"/>
</dbReference>
<dbReference type="GO" id="GO:0006412">
    <property type="term" value="P:translation"/>
    <property type="evidence" value="ECO:0007669"/>
    <property type="project" value="UniProtKB-UniRule"/>
</dbReference>
<dbReference type="CDD" id="cd00427">
    <property type="entry name" value="Ribosomal_L29_HIP"/>
    <property type="match status" value="1"/>
</dbReference>
<dbReference type="FunFam" id="1.10.287.310:FF:000001">
    <property type="entry name" value="50S ribosomal protein L29"/>
    <property type="match status" value="1"/>
</dbReference>
<dbReference type="Gene3D" id="1.10.287.310">
    <property type="match status" value="1"/>
</dbReference>
<dbReference type="HAMAP" id="MF_00374">
    <property type="entry name" value="Ribosomal_uL29"/>
    <property type="match status" value="1"/>
</dbReference>
<dbReference type="InterPro" id="IPR050063">
    <property type="entry name" value="Ribosomal_protein_uL29"/>
</dbReference>
<dbReference type="InterPro" id="IPR001854">
    <property type="entry name" value="Ribosomal_uL29"/>
</dbReference>
<dbReference type="InterPro" id="IPR018254">
    <property type="entry name" value="Ribosomal_uL29_CS"/>
</dbReference>
<dbReference type="InterPro" id="IPR036049">
    <property type="entry name" value="Ribosomal_uL29_sf"/>
</dbReference>
<dbReference type="NCBIfam" id="TIGR00012">
    <property type="entry name" value="L29"/>
    <property type="match status" value="1"/>
</dbReference>
<dbReference type="PANTHER" id="PTHR10916">
    <property type="entry name" value="60S RIBOSOMAL PROTEIN L35/50S RIBOSOMAL PROTEIN L29"/>
    <property type="match status" value="1"/>
</dbReference>
<dbReference type="PANTHER" id="PTHR10916:SF0">
    <property type="entry name" value="LARGE RIBOSOMAL SUBUNIT PROTEIN UL29C"/>
    <property type="match status" value="1"/>
</dbReference>
<dbReference type="Pfam" id="PF00831">
    <property type="entry name" value="Ribosomal_L29"/>
    <property type="match status" value="1"/>
</dbReference>
<dbReference type="SUPFAM" id="SSF46561">
    <property type="entry name" value="Ribosomal protein L29 (L29p)"/>
    <property type="match status" value="1"/>
</dbReference>
<dbReference type="PROSITE" id="PS00579">
    <property type="entry name" value="RIBOSOMAL_L29"/>
    <property type="match status" value="1"/>
</dbReference>
<accession>Q3K3W1</accession>
<reference key="1">
    <citation type="journal article" date="2005" name="Proc. Natl. Acad. Sci. U.S.A.">
        <title>Genome analysis of multiple pathogenic isolates of Streptococcus agalactiae: implications for the microbial 'pan-genome'.</title>
        <authorList>
            <person name="Tettelin H."/>
            <person name="Masignani V."/>
            <person name="Cieslewicz M.J."/>
            <person name="Donati C."/>
            <person name="Medini D."/>
            <person name="Ward N.L."/>
            <person name="Angiuoli S.V."/>
            <person name="Crabtree J."/>
            <person name="Jones A.L."/>
            <person name="Durkin A.S."/>
            <person name="DeBoy R.T."/>
            <person name="Davidsen T.M."/>
            <person name="Mora M."/>
            <person name="Scarselli M."/>
            <person name="Margarit y Ros I."/>
            <person name="Peterson J.D."/>
            <person name="Hauser C.R."/>
            <person name="Sundaram J.P."/>
            <person name="Nelson W.C."/>
            <person name="Madupu R."/>
            <person name="Brinkac L.M."/>
            <person name="Dodson R.J."/>
            <person name="Rosovitz M.J."/>
            <person name="Sullivan S.A."/>
            <person name="Daugherty S.C."/>
            <person name="Haft D.H."/>
            <person name="Selengut J."/>
            <person name="Gwinn M.L."/>
            <person name="Zhou L."/>
            <person name="Zafar N."/>
            <person name="Khouri H."/>
            <person name="Radune D."/>
            <person name="Dimitrov G."/>
            <person name="Watkins K."/>
            <person name="O'Connor K.J."/>
            <person name="Smith S."/>
            <person name="Utterback T.R."/>
            <person name="White O."/>
            <person name="Rubens C.E."/>
            <person name="Grandi G."/>
            <person name="Madoff L.C."/>
            <person name="Kasper D.L."/>
            <person name="Telford J.L."/>
            <person name="Wessels M.R."/>
            <person name="Rappuoli R."/>
            <person name="Fraser C.M."/>
        </authorList>
    </citation>
    <scope>NUCLEOTIDE SEQUENCE [LARGE SCALE GENOMIC DNA]</scope>
    <source>
        <strain>ATCC 27591 / A909 / CDC SS700</strain>
    </source>
</reference>
<gene>
    <name evidence="1" type="primary">rpmC</name>
    <name type="ordered locus">SAK_0099</name>
</gene>
<comment type="similarity">
    <text evidence="1">Belongs to the universal ribosomal protein uL29 family.</text>
</comment>
<organism>
    <name type="scientific">Streptococcus agalactiae serotype Ia (strain ATCC 27591 / A909 / CDC SS700)</name>
    <dbReference type="NCBI Taxonomy" id="205921"/>
    <lineage>
        <taxon>Bacteria</taxon>
        <taxon>Bacillati</taxon>
        <taxon>Bacillota</taxon>
        <taxon>Bacilli</taxon>
        <taxon>Lactobacillales</taxon>
        <taxon>Streptococcaceae</taxon>
        <taxon>Streptococcus</taxon>
    </lineage>
</organism>
<feature type="chain" id="PRO_1000007622" description="Large ribosomal subunit protein uL29">
    <location>
        <begin position="1"/>
        <end position="68"/>
    </location>
</feature>
<keyword id="KW-0687">Ribonucleoprotein</keyword>
<keyword id="KW-0689">Ribosomal protein</keyword>